<keyword id="KW-0028">Amino-acid biosynthesis</keyword>
<keyword id="KW-0067">ATP-binding</keyword>
<keyword id="KW-0963">Cytoplasm</keyword>
<keyword id="KW-0368">Histidine biosynthesis</keyword>
<keyword id="KW-0378">Hydrolase</keyword>
<keyword id="KW-0547">Nucleotide-binding</keyword>
<sequence length="109" mass="12042">MSDVLERLAQVLEARKDADPDTSYVASLHAKGLNKILEKVGEECTETLLAAKDAEHSGETRDLVYETADLWFHSLVMLSRLGLGPKDVLDELASRFDLSGLEEKASRNP</sequence>
<gene>
    <name evidence="1" type="primary">hisE</name>
    <name type="ordered locus">Maqu_3419</name>
</gene>
<dbReference type="EC" id="3.6.1.31" evidence="1"/>
<dbReference type="EMBL" id="CP000514">
    <property type="protein sequence ID" value="ABM20490.1"/>
    <property type="molecule type" value="Genomic_DNA"/>
</dbReference>
<dbReference type="RefSeq" id="WP_011786831.1">
    <property type="nucleotide sequence ID" value="NC_008740.1"/>
</dbReference>
<dbReference type="SMR" id="A1U671"/>
<dbReference type="STRING" id="351348.Maqu_3419"/>
<dbReference type="KEGG" id="maq:Maqu_3419"/>
<dbReference type="eggNOG" id="COG0140">
    <property type="taxonomic scope" value="Bacteria"/>
</dbReference>
<dbReference type="HOGENOM" id="CLU_123337_1_2_6"/>
<dbReference type="OrthoDB" id="9795769at2"/>
<dbReference type="UniPathway" id="UPA00031">
    <property type="reaction ID" value="UER00007"/>
</dbReference>
<dbReference type="Proteomes" id="UP000000998">
    <property type="component" value="Chromosome"/>
</dbReference>
<dbReference type="GO" id="GO:0005737">
    <property type="term" value="C:cytoplasm"/>
    <property type="evidence" value="ECO:0007669"/>
    <property type="project" value="UniProtKB-SubCell"/>
</dbReference>
<dbReference type="GO" id="GO:0005524">
    <property type="term" value="F:ATP binding"/>
    <property type="evidence" value="ECO:0007669"/>
    <property type="project" value="UniProtKB-KW"/>
</dbReference>
<dbReference type="GO" id="GO:0004636">
    <property type="term" value="F:phosphoribosyl-ATP diphosphatase activity"/>
    <property type="evidence" value="ECO:0007669"/>
    <property type="project" value="UniProtKB-UniRule"/>
</dbReference>
<dbReference type="GO" id="GO:0000105">
    <property type="term" value="P:L-histidine biosynthetic process"/>
    <property type="evidence" value="ECO:0007669"/>
    <property type="project" value="UniProtKB-UniRule"/>
</dbReference>
<dbReference type="CDD" id="cd11534">
    <property type="entry name" value="NTP-PPase_HisIE_like"/>
    <property type="match status" value="1"/>
</dbReference>
<dbReference type="Gene3D" id="1.10.287.1080">
    <property type="entry name" value="MazG-like"/>
    <property type="match status" value="1"/>
</dbReference>
<dbReference type="HAMAP" id="MF_01020">
    <property type="entry name" value="HisE"/>
    <property type="match status" value="1"/>
</dbReference>
<dbReference type="InterPro" id="IPR008179">
    <property type="entry name" value="HisE"/>
</dbReference>
<dbReference type="InterPro" id="IPR021130">
    <property type="entry name" value="PRib-ATP_PPHydrolase-like"/>
</dbReference>
<dbReference type="NCBIfam" id="TIGR03188">
    <property type="entry name" value="histidine_hisI"/>
    <property type="match status" value="1"/>
</dbReference>
<dbReference type="NCBIfam" id="NF001611">
    <property type="entry name" value="PRK00400.1-3"/>
    <property type="match status" value="1"/>
</dbReference>
<dbReference type="PANTHER" id="PTHR42945">
    <property type="entry name" value="HISTIDINE BIOSYNTHESIS BIFUNCTIONAL PROTEIN"/>
    <property type="match status" value="1"/>
</dbReference>
<dbReference type="PANTHER" id="PTHR42945:SF9">
    <property type="entry name" value="HISTIDINE BIOSYNTHESIS BIFUNCTIONAL PROTEIN HISIE"/>
    <property type="match status" value="1"/>
</dbReference>
<dbReference type="Pfam" id="PF01503">
    <property type="entry name" value="PRA-PH"/>
    <property type="match status" value="1"/>
</dbReference>
<dbReference type="SUPFAM" id="SSF101386">
    <property type="entry name" value="all-alpha NTP pyrophosphatases"/>
    <property type="match status" value="1"/>
</dbReference>
<feature type="chain" id="PRO_1000063345" description="Phosphoribosyl-ATP pyrophosphatase">
    <location>
        <begin position="1"/>
        <end position="109"/>
    </location>
</feature>
<reference key="1">
    <citation type="journal article" date="2011" name="Appl. Environ. Microbiol.">
        <title>Genomic potential of Marinobacter aquaeolei, a biogeochemical 'opportunitroph'.</title>
        <authorList>
            <person name="Singer E."/>
            <person name="Webb E.A."/>
            <person name="Nelson W.C."/>
            <person name="Heidelberg J.F."/>
            <person name="Ivanova N."/>
            <person name="Pati A."/>
            <person name="Edwards K.J."/>
        </authorList>
    </citation>
    <scope>NUCLEOTIDE SEQUENCE [LARGE SCALE GENOMIC DNA]</scope>
    <source>
        <strain>ATCC 700491 / DSM 11845 / VT8</strain>
    </source>
</reference>
<name>HIS2_MARN8</name>
<organism>
    <name type="scientific">Marinobacter nauticus (strain ATCC 700491 / DSM 11845 / VT8)</name>
    <name type="common">Marinobacter aquaeolei</name>
    <dbReference type="NCBI Taxonomy" id="351348"/>
    <lineage>
        <taxon>Bacteria</taxon>
        <taxon>Pseudomonadati</taxon>
        <taxon>Pseudomonadota</taxon>
        <taxon>Gammaproteobacteria</taxon>
        <taxon>Pseudomonadales</taxon>
        <taxon>Marinobacteraceae</taxon>
        <taxon>Marinobacter</taxon>
    </lineage>
</organism>
<proteinExistence type="inferred from homology"/>
<accession>A1U671</accession>
<evidence type="ECO:0000255" key="1">
    <source>
        <dbReference type="HAMAP-Rule" id="MF_01020"/>
    </source>
</evidence>
<comment type="catalytic activity">
    <reaction evidence="1">
        <text>1-(5-phospho-beta-D-ribosyl)-ATP + H2O = 1-(5-phospho-beta-D-ribosyl)-5'-AMP + diphosphate + H(+)</text>
        <dbReference type="Rhea" id="RHEA:22828"/>
        <dbReference type="ChEBI" id="CHEBI:15377"/>
        <dbReference type="ChEBI" id="CHEBI:15378"/>
        <dbReference type="ChEBI" id="CHEBI:33019"/>
        <dbReference type="ChEBI" id="CHEBI:59457"/>
        <dbReference type="ChEBI" id="CHEBI:73183"/>
        <dbReference type="EC" id="3.6.1.31"/>
    </reaction>
</comment>
<comment type="pathway">
    <text evidence="1">Amino-acid biosynthesis; L-histidine biosynthesis; L-histidine from 5-phospho-alpha-D-ribose 1-diphosphate: step 2/9.</text>
</comment>
<comment type="subcellular location">
    <subcellularLocation>
        <location evidence="1">Cytoplasm</location>
    </subcellularLocation>
</comment>
<comment type="similarity">
    <text evidence="1">Belongs to the PRA-PH family.</text>
</comment>
<protein>
    <recommendedName>
        <fullName evidence="1">Phosphoribosyl-ATP pyrophosphatase</fullName>
        <shortName evidence="1">PRA-PH</shortName>
        <ecNumber evidence="1">3.6.1.31</ecNumber>
    </recommendedName>
</protein>